<geneLocation type="chloroplast"/>
<gene>
    <name type="primary">ycf21</name>
</gene>
<dbReference type="EMBL" id="U38804">
    <property type="protein sequence ID" value="AAC08266.1"/>
    <property type="molecule type" value="Genomic_DNA"/>
</dbReference>
<dbReference type="PIR" id="S73301">
    <property type="entry name" value="S73301"/>
</dbReference>
<dbReference type="RefSeq" id="NP_053990.1">
    <property type="nucleotide sequence ID" value="NC_000925.1"/>
</dbReference>
<dbReference type="SMR" id="P51380"/>
<dbReference type="GeneID" id="810019"/>
<dbReference type="GO" id="GO:0009507">
    <property type="term" value="C:chloroplast"/>
    <property type="evidence" value="ECO:0007669"/>
    <property type="project" value="UniProtKB-SubCell"/>
</dbReference>
<dbReference type="Gene3D" id="3.40.1410.10">
    <property type="entry name" value="Chorismate lyase-like"/>
    <property type="match status" value="1"/>
</dbReference>
<dbReference type="InterPro" id="IPR028978">
    <property type="entry name" value="Chorismate_lyase_/UTRA_dom_sf"/>
</dbReference>
<dbReference type="InterPro" id="IPR002800">
    <property type="entry name" value="Rv2949c-like"/>
</dbReference>
<dbReference type="Pfam" id="PF01947">
    <property type="entry name" value="Rv2949c-like"/>
    <property type="match status" value="1"/>
</dbReference>
<dbReference type="SUPFAM" id="SSF64288">
    <property type="entry name" value="Chorismate lyase-like"/>
    <property type="match status" value="1"/>
</dbReference>
<protein>
    <recommendedName>
        <fullName>Uncharacterized protein ycf21</fullName>
    </recommendedName>
</protein>
<evidence type="ECO:0000305" key="1"/>
<sequence length="174" mass="20632">MTFNFVSCWNTKRILPNQIYRNGSIPIIWKVILLGDGSFTRHSEILTYAITSVDHLNTFIYSNEQILLKSFINRKVWIGTNTCKKLIFASSWWNIKGYEKLYKYPSQAIGSFFIQSELDFYRDIHEIFLGYSFELEKLFSSKGPFWGRHYTLFYKGKPISIIYEIFSPLLENFQ</sequence>
<organism>
    <name type="scientific">Porphyra purpurea</name>
    <name type="common">Red seaweed</name>
    <name type="synonym">Ulva purpurea</name>
    <dbReference type="NCBI Taxonomy" id="2787"/>
    <lineage>
        <taxon>Eukaryota</taxon>
        <taxon>Rhodophyta</taxon>
        <taxon>Bangiophyceae</taxon>
        <taxon>Bangiales</taxon>
        <taxon>Bangiaceae</taxon>
        <taxon>Porphyra</taxon>
    </lineage>
</organism>
<reference key="1">
    <citation type="journal article" date="1995" name="Plant Mol. Biol. Rep.">
        <title>Complete nucleotide sequence of the Porphyra purpurea chloroplast genome.</title>
        <authorList>
            <person name="Reith M.E."/>
            <person name="Munholland J."/>
        </authorList>
    </citation>
    <scope>NUCLEOTIDE SEQUENCE [LARGE SCALE GENOMIC DNA]</scope>
    <source>
        <strain>Avonport</strain>
    </source>
</reference>
<accession>P51380</accession>
<keyword id="KW-0150">Chloroplast</keyword>
<keyword id="KW-0934">Plastid</keyword>
<proteinExistence type="inferred from homology"/>
<comment type="subcellular location">
    <subcellularLocation>
        <location>Plastid</location>
        <location>Chloroplast</location>
    </subcellularLocation>
</comment>
<comment type="similarity">
    <text evidence="1">Belongs to the ycf21 family.</text>
</comment>
<name>YCF21_PORPU</name>
<feature type="chain" id="PRO_0000217333" description="Uncharacterized protein ycf21">
    <location>
        <begin position="1"/>
        <end position="174"/>
    </location>
</feature>